<dbReference type="EMBL" id="M29691">
    <property type="protein sequence ID" value="AAA83371.1"/>
    <property type="molecule type" value="Genomic_DNA"/>
</dbReference>
<dbReference type="EMBL" id="D84432">
    <property type="protein sequence ID" value="BAA12537.1"/>
    <property type="molecule type" value="Genomic_DNA"/>
</dbReference>
<dbReference type="EMBL" id="AL009126">
    <property type="protein sequence ID" value="CAB14400.1"/>
    <property type="molecule type" value="Genomic_DNA"/>
</dbReference>
<dbReference type="PIR" id="F30338">
    <property type="entry name" value="F30338"/>
</dbReference>
<dbReference type="RefSeq" id="NP_390349.1">
    <property type="nucleotide sequence ID" value="NC_000964.3"/>
</dbReference>
<dbReference type="RefSeq" id="WP_003230165.1">
    <property type="nucleotide sequence ID" value="NZ_OZ025638.1"/>
</dbReference>
<dbReference type="SMR" id="P25957"/>
<dbReference type="FunCoup" id="P25957">
    <property type="interactions" value="23"/>
</dbReference>
<dbReference type="STRING" id="224308.BSU24690"/>
<dbReference type="PaxDb" id="224308-BSU24690"/>
<dbReference type="DNASU" id="938518"/>
<dbReference type="EnsemblBacteria" id="CAB14400">
    <property type="protein sequence ID" value="CAB14400"/>
    <property type="gene ID" value="BSU_24690"/>
</dbReference>
<dbReference type="GeneID" id="938518"/>
<dbReference type="KEGG" id="bsu:BSU24690"/>
<dbReference type="PATRIC" id="fig|224308.179.peg.2687"/>
<dbReference type="eggNOG" id="ENOG5030P9X">
    <property type="taxonomic scope" value="Bacteria"/>
</dbReference>
<dbReference type="InParanoid" id="P25957"/>
<dbReference type="OrthoDB" id="2892667at2"/>
<dbReference type="BioCyc" id="BSUB:BSU24690-MONOMER"/>
<dbReference type="Proteomes" id="UP000001570">
    <property type="component" value="Chromosome"/>
</dbReference>
<dbReference type="GO" id="GO:0009986">
    <property type="term" value="C:cell surface"/>
    <property type="evidence" value="ECO:0007669"/>
    <property type="project" value="UniProtKB-SubCell"/>
</dbReference>
<dbReference type="GO" id="GO:0005886">
    <property type="term" value="C:plasma membrane"/>
    <property type="evidence" value="ECO:0007669"/>
    <property type="project" value="UniProtKB-SubCell"/>
</dbReference>
<dbReference type="GO" id="GO:0030420">
    <property type="term" value="P:establishment of competence for transformation"/>
    <property type="evidence" value="ECO:0007669"/>
    <property type="project" value="UniProtKB-KW"/>
</dbReference>
<dbReference type="InterPro" id="IPR012902">
    <property type="entry name" value="N_methyl_site"/>
</dbReference>
<dbReference type="InterPro" id="IPR053468">
    <property type="entry name" value="T4P_transformation_protein"/>
</dbReference>
<dbReference type="NCBIfam" id="NF041013">
    <property type="entry name" value="T4P_ComGE"/>
    <property type="match status" value="1"/>
</dbReference>
<dbReference type="PROSITE" id="PS00409">
    <property type="entry name" value="PROKAR_NTER_METHYL"/>
    <property type="match status" value="1"/>
</dbReference>
<sequence>MWRENKGFSTIETMSALSLWLFVLLTVVPLWDKLMADEKMAESREIGYQMMNESISKYVMSGEGAASKTITKNNHIYAMKWEEEGEYQNVCIKAAAYKEKSFCLSILQTEWLHAS</sequence>
<keyword id="KW-1003">Cell membrane</keyword>
<keyword id="KW-0178">Competence</keyword>
<keyword id="KW-0472">Membrane</keyword>
<keyword id="KW-0488">Methylation</keyword>
<keyword id="KW-1185">Reference proteome</keyword>
<keyword id="KW-0812">Transmembrane</keyword>
<keyword id="KW-1133">Transmembrane helix</keyword>
<keyword id="KW-0813">Transport</keyword>
<organism>
    <name type="scientific">Bacillus subtilis (strain 168)</name>
    <dbReference type="NCBI Taxonomy" id="224308"/>
    <lineage>
        <taxon>Bacteria</taxon>
        <taxon>Bacillati</taxon>
        <taxon>Bacillota</taxon>
        <taxon>Bacilli</taxon>
        <taxon>Bacillales</taxon>
        <taxon>Bacillaceae</taxon>
        <taxon>Bacillus</taxon>
    </lineage>
</organism>
<reference key="1">
    <citation type="journal article" date="1989" name="J. Bacteriol.">
        <title>Nucleotide sequence and genetic organization of the Bacillus subtilis comG operon.</title>
        <authorList>
            <person name="Albano M."/>
            <person name="Breitling R."/>
            <person name="Dubnau D.A."/>
        </authorList>
    </citation>
    <scope>NUCLEOTIDE SEQUENCE [GENOMIC DNA]</scope>
</reference>
<reference key="2">
    <citation type="journal article" date="1996" name="Microbiology">
        <title>Systematic sequencing of the 283 kb 210 degrees-232 degrees region of the Bacillus subtilis genome containing the skin element and many sporulation genes.</title>
        <authorList>
            <person name="Mizuno M."/>
            <person name="Masuda S."/>
            <person name="Takemaru K."/>
            <person name="Hosono S."/>
            <person name="Sato T."/>
            <person name="Takeuchi M."/>
            <person name="Kobayashi Y."/>
        </authorList>
    </citation>
    <scope>NUCLEOTIDE SEQUENCE [GENOMIC DNA]</scope>
    <source>
        <strain>168 / JH642</strain>
    </source>
</reference>
<reference key="3">
    <citation type="journal article" date="1997" name="Nature">
        <title>The complete genome sequence of the Gram-positive bacterium Bacillus subtilis.</title>
        <authorList>
            <person name="Kunst F."/>
            <person name="Ogasawara N."/>
            <person name="Moszer I."/>
            <person name="Albertini A.M."/>
            <person name="Alloni G."/>
            <person name="Azevedo V."/>
            <person name="Bertero M.G."/>
            <person name="Bessieres P."/>
            <person name="Bolotin A."/>
            <person name="Borchert S."/>
            <person name="Borriss R."/>
            <person name="Boursier L."/>
            <person name="Brans A."/>
            <person name="Braun M."/>
            <person name="Brignell S.C."/>
            <person name="Bron S."/>
            <person name="Brouillet S."/>
            <person name="Bruschi C.V."/>
            <person name="Caldwell B."/>
            <person name="Capuano V."/>
            <person name="Carter N.M."/>
            <person name="Choi S.-K."/>
            <person name="Codani J.-J."/>
            <person name="Connerton I.F."/>
            <person name="Cummings N.J."/>
            <person name="Daniel R.A."/>
            <person name="Denizot F."/>
            <person name="Devine K.M."/>
            <person name="Duesterhoeft A."/>
            <person name="Ehrlich S.D."/>
            <person name="Emmerson P.T."/>
            <person name="Entian K.-D."/>
            <person name="Errington J."/>
            <person name="Fabret C."/>
            <person name="Ferrari E."/>
            <person name="Foulger D."/>
            <person name="Fritz C."/>
            <person name="Fujita M."/>
            <person name="Fujita Y."/>
            <person name="Fuma S."/>
            <person name="Galizzi A."/>
            <person name="Galleron N."/>
            <person name="Ghim S.-Y."/>
            <person name="Glaser P."/>
            <person name="Goffeau A."/>
            <person name="Golightly E.J."/>
            <person name="Grandi G."/>
            <person name="Guiseppi G."/>
            <person name="Guy B.J."/>
            <person name="Haga K."/>
            <person name="Haiech J."/>
            <person name="Harwood C.R."/>
            <person name="Henaut A."/>
            <person name="Hilbert H."/>
            <person name="Holsappel S."/>
            <person name="Hosono S."/>
            <person name="Hullo M.-F."/>
            <person name="Itaya M."/>
            <person name="Jones L.-M."/>
            <person name="Joris B."/>
            <person name="Karamata D."/>
            <person name="Kasahara Y."/>
            <person name="Klaerr-Blanchard M."/>
            <person name="Klein C."/>
            <person name="Kobayashi Y."/>
            <person name="Koetter P."/>
            <person name="Koningstein G."/>
            <person name="Krogh S."/>
            <person name="Kumano M."/>
            <person name="Kurita K."/>
            <person name="Lapidus A."/>
            <person name="Lardinois S."/>
            <person name="Lauber J."/>
            <person name="Lazarevic V."/>
            <person name="Lee S.-M."/>
            <person name="Levine A."/>
            <person name="Liu H."/>
            <person name="Masuda S."/>
            <person name="Mauel C."/>
            <person name="Medigue C."/>
            <person name="Medina N."/>
            <person name="Mellado R.P."/>
            <person name="Mizuno M."/>
            <person name="Moestl D."/>
            <person name="Nakai S."/>
            <person name="Noback M."/>
            <person name="Noone D."/>
            <person name="O'Reilly M."/>
            <person name="Ogawa K."/>
            <person name="Ogiwara A."/>
            <person name="Oudega B."/>
            <person name="Park S.-H."/>
            <person name="Parro V."/>
            <person name="Pohl T.M."/>
            <person name="Portetelle D."/>
            <person name="Porwollik S."/>
            <person name="Prescott A.M."/>
            <person name="Presecan E."/>
            <person name="Pujic P."/>
            <person name="Purnelle B."/>
            <person name="Rapoport G."/>
            <person name="Rey M."/>
            <person name="Reynolds S."/>
            <person name="Rieger M."/>
            <person name="Rivolta C."/>
            <person name="Rocha E."/>
            <person name="Roche B."/>
            <person name="Rose M."/>
            <person name="Sadaie Y."/>
            <person name="Sato T."/>
            <person name="Scanlan E."/>
            <person name="Schleich S."/>
            <person name="Schroeter R."/>
            <person name="Scoffone F."/>
            <person name="Sekiguchi J."/>
            <person name="Sekowska A."/>
            <person name="Seror S.J."/>
            <person name="Serror P."/>
            <person name="Shin B.-S."/>
            <person name="Soldo B."/>
            <person name="Sorokin A."/>
            <person name="Tacconi E."/>
            <person name="Takagi T."/>
            <person name="Takahashi H."/>
            <person name="Takemaru K."/>
            <person name="Takeuchi M."/>
            <person name="Tamakoshi A."/>
            <person name="Tanaka T."/>
            <person name="Terpstra P."/>
            <person name="Tognoni A."/>
            <person name="Tosato V."/>
            <person name="Uchiyama S."/>
            <person name="Vandenbol M."/>
            <person name="Vannier F."/>
            <person name="Vassarotti A."/>
            <person name="Viari A."/>
            <person name="Wambutt R."/>
            <person name="Wedler E."/>
            <person name="Wedler H."/>
            <person name="Weitzenegger T."/>
            <person name="Winters P."/>
            <person name="Wipat A."/>
            <person name="Yamamoto H."/>
            <person name="Yamane K."/>
            <person name="Yasumoto K."/>
            <person name="Yata K."/>
            <person name="Yoshida K."/>
            <person name="Yoshikawa H.-F."/>
            <person name="Zumstein E."/>
            <person name="Yoshikawa H."/>
            <person name="Danchin A."/>
        </authorList>
    </citation>
    <scope>NUCLEOTIDE SEQUENCE [LARGE SCALE GENOMIC DNA]</scope>
    <source>
        <strain>168</strain>
    </source>
</reference>
<reference key="4">
    <citation type="journal article" date="1998" name="J. Bacteriol.">
        <title>All seven comG open reading frames are required for DNA binding during transformation of competent Bacillus subtilis.</title>
        <authorList>
            <person name="Chung Y.S."/>
            <person name="Dubnau D.A."/>
        </authorList>
    </citation>
    <scope>FUNCTION</scope>
</reference>
<reference key="5">
    <citation type="journal article" date="1998" name="Mol. Microbiol.">
        <title>Cell surface localization and processing of the ComG proteins, required for DNA binding during transformation of Bacillus subtilis.</title>
        <authorList>
            <person name="Chung Y.S."/>
            <person name="Breidt F."/>
            <person name="Dubnau D.A."/>
        </authorList>
    </citation>
    <scope>SUBCELLULAR LOCATION</scope>
</reference>
<accession>P25957</accession>
<feature type="propeptide" id="PRO_0000024270" description="Leader sequence" evidence="2">
    <location>
        <begin position="1"/>
        <end position="7"/>
    </location>
</feature>
<feature type="chain" id="PRO_0000024271" description="ComG operon protein 5">
    <location>
        <begin position="8"/>
        <end position="115"/>
    </location>
</feature>
<feature type="transmembrane region" description="Helical" evidence="1">
    <location>
        <begin position="13"/>
        <end position="31"/>
    </location>
</feature>
<feature type="modified residue" description="N-methylphenylalanine" evidence="2">
    <location>
        <position position="8"/>
    </location>
</feature>
<feature type="sequence conflict" description="In Ref. 1; AAA83371." evidence="5" ref="1">
    <original>Q</original>
    <variation>E</variation>
    <location>
        <position position="88"/>
    </location>
</feature>
<comment type="function">
    <text evidence="3">Required for transformation and DNA binding.</text>
</comment>
<comment type="subcellular location">
    <subcellularLocation>
        <location evidence="4">Cell membrane</location>
        <topology evidence="4">Single-pass membrane protein</topology>
    </subcellularLocation>
    <subcellularLocation>
        <location evidence="4">Cell surface</location>
    </subcellularLocation>
    <text>The unprocessed form is an integral membrane protein. Upon cleavage, it is translocated to the outer face of the membrane.</text>
</comment>
<comment type="PTM">
    <text>Processing of ComGE in competent cells requires ComC.</text>
</comment>
<protein>
    <recommendedName>
        <fullName>ComG operon protein 5</fullName>
    </recommendedName>
</protein>
<name>COMGE_BACSU</name>
<proteinExistence type="inferred from homology"/>
<gene>
    <name type="primary">comGE</name>
    <name type="synonym">comG5</name>
    <name type="ordered locus">BSU24690</name>
</gene>
<evidence type="ECO:0000255" key="1"/>
<evidence type="ECO:0000255" key="2">
    <source>
        <dbReference type="PROSITE-ProRule" id="PRU01070"/>
    </source>
</evidence>
<evidence type="ECO:0000269" key="3">
    <source>
    </source>
</evidence>
<evidence type="ECO:0000269" key="4">
    <source>
    </source>
</evidence>
<evidence type="ECO:0000305" key="5"/>